<name>TIM23_XENLA</name>
<feature type="chain" id="PRO_0000354676" description="Mitochondrial import inner membrane translocase subunit Tim23">
    <location>
        <begin position="1"/>
        <end position="209"/>
    </location>
</feature>
<feature type="transmembrane region" description="Helical" evidence="2">
    <location>
        <begin position="73"/>
        <end position="93"/>
    </location>
</feature>
<feature type="transmembrane region" description="Helical" evidence="2">
    <location>
        <begin position="125"/>
        <end position="145"/>
    </location>
</feature>
<feature type="transmembrane region" description="Helical" evidence="2">
    <location>
        <begin position="180"/>
        <end position="200"/>
    </location>
</feature>
<comment type="function">
    <text evidence="1">Essential component of the TIM23 complex, a complex that mediates the translocation of transit peptide-containing proteins across the mitochondrial inner membrane.</text>
</comment>
<comment type="subunit">
    <text evidence="1">Component of the TIM23 complex at least composed of timm23, timm17 and timm50. The complex interacts with the timm44 component of the PAM complex (By similarity).</text>
</comment>
<comment type="subcellular location">
    <subcellularLocation>
        <location evidence="1">Mitochondrion inner membrane</location>
        <topology evidence="2">Multi-pass membrane protein</topology>
    </subcellularLocation>
</comment>
<comment type="similarity">
    <text evidence="3">Belongs to the Tim17/Tim22/Tim23 family.</text>
</comment>
<accession>Q6INU6</accession>
<proteinExistence type="evidence at transcript level"/>
<dbReference type="EMBL" id="BC072176">
    <property type="protein sequence ID" value="AAH72176.1"/>
    <property type="molecule type" value="mRNA"/>
</dbReference>
<dbReference type="RefSeq" id="NP_001085062.1">
    <property type="nucleotide sequence ID" value="NM_001091593.1"/>
</dbReference>
<dbReference type="SMR" id="Q6INU6"/>
<dbReference type="DNASU" id="432132"/>
<dbReference type="GeneID" id="432132"/>
<dbReference type="KEGG" id="xla:432132"/>
<dbReference type="AGR" id="Xenbase:XB-GENE-994540"/>
<dbReference type="CTD" id="432132"/>
<dbReference type="Xenbase" id="XB-GENE-994540">
    <property type="gene designation" value="timm23.L"/>
</dbReference>
<dbReference type="OrthoDB" id="159299at2759"/>
<dbReference type="Proteomes" id="UP000186698">
    <property type="component" value="Chromosome 7L"/>
</dbReference>
<dbReference type="Bgee" id="432132">
    <property type="expression patterns" value="Expressed in egg cell and 19 other cell types or tissues"/>
</dbReference>
<dbReference type="GO" id="GO:0005744">
    <property type="term" value="C:TIM23 mitochondrial import inner membrane translocase complex"/>
    <property type="evidence" value="ECO:0000318"/>
    <property type="project" value="GO_Central"/>
</dbReference>
<dbReference type="GO" id="GO:0008320">
    <property type="term" value="F:protein transmembrane transporter activity"/>
    <property type="evidence" value="ECO:0000318"/>
    <property type="project" value="GO_Central"/>
</dbReference>
<dbReference type="GO" id="GO:0030150">
    <property type="term" value="P:protein import into mitochondrial matrix"/>
    <property type="evidence" value="ECO:0000318"/>
    <property type="project" value="GO_Central"/>
</dbReference>
<dbReference type="InterPro" id="IPR005681">
    <property type="entry name" value="Tim23"/>
</dbReference>
<dbReference type="InterPro" id="IPR045238">
    <property type="entry name" value="Tim23-like"/>
</dbReference>
<dbReference type="NCBIfam" id="TIGR00983">
    <property type="entry name" value="3a0801s02tim23"/>
    <property type="match status" value="1"/>
</dbReference>
<dbReference type="PANTHER" id="PTHR15371:SF39">
    <property type="entry name" value="MITOCHONDRIAL IMPORT INNER MEMBRANE TRANSLOCASE SUBUNIT TIM23"/>
    <property type="match status" value="1"/>
</dbReference>
<dbReference type="PANTHER" id="PTHR15371">
    <property type="entry name" value="TIM23"/>
    <property type="match status" value="1"/>
</dbReference>
<dbReference type="Pfam" id="PF02466">
    <property type="entry name" value="Tim17"/>
    <property type="match status" value="1"/>
</dbReference>
<evidence type="ECO:0000250" key="1">
    <source>
        <dbReference type="UniProtKB" id="O14925"/>
    </source>
</evidence>
<evidence type="ECO:0000255" key="2"/>
<evidence type="ECO:0000305" key="3"/>
<reference key="1">
    <citation type="submission" date="2004-06" db="EMBL/GenBank/DDBJ databases">
        <authorList>
            <consortium name="NIH - Xenopus Gene Collection (XGC) project"/>
        </authorList>
    </citation>
    <scope>NUCLEOTIDE SEQUENCE [LARGE SCALE MRNA]</scope>
    <source>
        <tissue>Ovary</tissue>
    </source>
</reference>
<sequence>MDTNHPGSAGGRGGLGSIFGGGPPGYSHSDLAGVPLTGMSPLSPYLNVDPMYLVQDTDEFILPTGANKTRGRFELAFFTIGGCCISGAAFGALNGLKLGFKETQNMPWSKPKNVQILNMVTRQGALWANTLGSLALLYSAFGVIVEKTRGAEDDLNTIAAGTMTGMLYKSTGGLRGVARGGLAGLALASTFALYNNWEHIKGSSSQVSL</sequence>
<gene>
    <name type="primary">timm23</name>
    <name type="synonym">timm23b</name>
</gene>
<keyword id="KW-0472">Membrane</keyword>
<keyword id="KW-0496">Mitochondrion</keyword>
<keyword id="KW-0999">Mitochondrion inner membrane</keyword>
<keyword id="KW-0653">Protein transport</keyword>
<keyword id="KW-1185">Reference proteome</keyword>
<keyword id="KW-0811">Translocation</keyword>
<keyword id="KW-0812">Transmembrane</keyword>
<keyword id="KW-1133">Transmembrane helix</keyword>
<keyword id="KW-0813">Transport</keyword>
<organism>
    <name type="scientific">Xenopus laevis</name>
    <name type="common">African clawed frog</name>
    <dbReference type="NCBI Taxonomy" id="8355"/>
    <lineage>
        <taxon>Eukaryota</taxon>
        <taxon>Metazoa</taxon>
        <taxon>Chordata</taxon>
        <taxon>Craniata</taxon>
        <taxon>Vertebrata</taxon>
        <taxon>Euteleostomi</taxon>
        <taxon>Amphibia</taxon>
        <taxon>Batrachia</taxon>
        <taxon>Anura</taxon>
        <taxon>Pipoidea</taxon>
        <taxon>Pipidae</taxon>
        <taxon>Xenopodinae</taxon>
        <taxon>Xenopus</taxon>
        <taxon>Xenopus</taxon>
    </lineage>
</organism>
<protein>
    <recommendedName>
        <fullName>Mitochondrial import inner membrane translocase subunit Tim23</fullName>
    </recommendedName>
</protein>